<dbReference type="EC" id="2.7.8.-" evidence="1"/>
<dbReference type="EMBL" id="CP001600">
    <property type="protein sequence ID" value="ACR68855.1"/>
    <property type="molecule type" value="Genomic_DNA"/>
</dbReference>
<dbReference type="RefSeq" id="WP_015871011.1">
    <property type="nucleotide sequence ID" value="NZ_CP169062.1"/>
</dbReference>
<dbReference type="SMR" id="C5BDA3"/>
<dbReference type="STRING" id="67780.B6E78_01555"/>
<dbReference type="GeneID" id="69538649"/>
<dbReference type="KEGG" id="eic:NT01EI_1674"/>
<dbReference type="PATRIC" id="fig|634503.3.peg.1500"/>
<dbReference type="HOGENOM" id="CLU_038053_1_0_6"/>
<dbReference type="OrthoDB" id="9814092at2"/>
<dbReference type="Proteomes" id="UP000001485">
    <property type="component" value="Chromosome"/>
</dbReference>
<dbReference type="GO" id="GO:0005886">
    <property type="term" value="C:plasma membrane"/>
    <property type="evidence" value="ECO:0007669"/>
    <property type="project" value="UniProtKB-SubCell"/>
</dbReference>
<dbReference type="GO" id="GO:0008808">
    <property type="term" value="F:cardiolipin synthase activity"/>
    <property type="evidence" value="ECO:0007669"/>
    <property type="project" value="InterPro"/>
</dbReference>
<dbReference type="GO" id="GO:0032049">
    <property type="term" value="P:cardiolipin biosynthetic process"/>
    <property type="evidence" value="ECO:0007669"/>
    <property type="project" value="InterPro"/>
</dbReference>
<dbReference type="CDD" id="cd09158">
    <property type="entry name" value="PLDc_EcCLS_like_2"/>
    <property type="match status" value="1"/>
</dbReference>
<dbReference type="FunFam" id="3.30.870.10:FF:000002">
    <property type="entry name" value="Cardiolipin synthase A"/>
    <property type="match status" value="1"/>
</dbReference>
<dbReference type="FunFam" id="3.30.870.10:FF:000003">
    <property type="entry name" value="Cardiolipin synthase A"/>
    <property type="match status" value="1"/>
</dbReference>
<dbReference type="Gene3D" id="3.30.870.10">
    <property type="entry name" value="Endonuclease Chain A"/>
    <property type="match status" value="2"/>
</dbReference>
<dbReference type="HAMAP" id="MF_00190">
    <property type="entry name" value="Cardiolipin_synth_ClsA"/>
    <property type="match status" value="1"/>
</dbReference>
<dbReference type="InterPro" id="IPR022924">
    <property type="entry name" value="Cardiolipin_synthase"/>
</dbReference>
<dbReference type="InterPro" id="IPR030840">
    <property type="entry name" value="CL_synthase_A"/>
</dbReference>
<dbReference type="InterPro" id="IPR027379">
    <property type="entry name" value="CLS_N"/>
</dbReference>
<dbReference type="InterPro" id="IPR025202">
    <property type="entry name" value="PLD-like_dom"/>
</dbReference>
<dbReference type="InterPro" id="IPR001736">
    <property type="entry name" value="PLipase_D/transphosphatidylase"/>
</dbReference>
<dbReference type="NCBIfam" id="TIGR04265">
    <property type="entry name" value="bac_cardiolipin"/>
    <property type="match status" value="1"/>
</dbReference>
<dbReference type="PANTHER" id="PTHR21248">
    <property type="entry name" value="CARDIOLIPIN SYNTHASE"/>
    <property type="match status" value="1"/>
</dbReference>
<dbReference type="PANTHER" id="PTHR21248:SF22">
    <property type="entry name" value="PHOSPHOLIPASE D"/>
    <property type="match status" value="1"/>
</dbReference>
<dbReference type="Pfam" id="PF13091">
    <property type="entry name" value="PLDc_2"/>
    <property type="match status" value="2"/>
</dbReference>
<dbReference type="Pfam" id="PF13396">
    <property type="entry name" value="PLDc_N"/>
    <property type="match status" value="1"/>
</dbReference>
<dbReference type="SMART" id="SM00155">
    <property type="entry name" value="PLDc"/>
    <property type="match status" value="2"/>
</dbReference>
<dbReference type="SUPFAM" id="SSF56024">
    <property type="entry name" value="Phospholipase D/nuclease"/>
    <property type="match status" value="2"/>
</dbReference>
<dbReference type="PROSITE" id="PS50035">
    <property type="entry name" value="PLD"/>
    <property type="match status" value="2"/>
</dbReference>
<feature type="chain" id="PRO_1000203994" description="Cardiolipin synthase A">
    <location>
        <begin position="1"/>
        <end position="486"/>
    </location>
</feature>
<feature type="transmembrane region" description="Helical" evidence="1">
    <location>
        <begin position="3"/>
        <end position="23"/>
    </location>
</feature>
<feature type="transmembrane region" description="Helical" evidence="1">
    <location>
        <begin position="38"/>
        <end position="58"/>
    </location>
</feature>
<feature type="domain" description="PLD phosphodiesterase 1" evidence="1">
    <location>
        <begin position="219"/>
        <end position="246"/>
    </location>
</feature>
<feature type="domain" description="PLD phosphodiesterase 2" evidence="1">
    <location>
        <begin position="399"/>
        <end position="426"/>
    </location>
</feature>
<feature type="active site" evidence="1">
    <location>
        <position position="224"/>
    </location>
</feature>
<feature type="active site" evidence="1">
    <location>
        <position position="226"/>
    </location>
</feature>
<feature type="active site" evidence="1">
    <location>
        <position position="231"/>
    </location>
</feature>
<feature type="active site" evidence="1">
    <location>
        <position position="404"/>
    </location>
</feature>
<feature type="active site" evidence="1">
    <location>
        <position position="406"/>
    </location>
</feature>
<feature type="active site" evidence="1">
    <location>
        <position position="411"/>
    </location>
</feature>
<gene>
    <name evidence="1" type="primary">clsA</name>
    <name type="synonym">cls</name>
    <name type="ordered locus">NT01EI_1674</name>
</gene>
<keyword id="KW-0997">Cell inner membrane</keyword>
<keyword id="KW-1003">Cell membrane</keyword>
<keyword id="KW-0444">Lipid biosynthesis</keyword>
<keyword id="KW-0443">Lipid metabolism</keyword>
<keyword id="KW-0472">Membrane</keyword>
<keyword id="KW-0594">Phospholipid biosynthesis</keyword>
<keyword id="KW-1208">Phospholipid metabolism</keyword>
<keyword id="KW-0677">Repeat</keyword>
<keyword id="KW-0808">Transferase</keyword>
<keyword id="KW-0812">Transmembrane</keyword>
<keyword id="KW-1133">Transmembrane helix</keyword>
<organism>
    <name type="scientific">Edwardsiella ictaluri (strain 93-146)</name>
    <dbReference type="NCBI Taxonomy" id="634503"/>
    <lineage>
        <taxon>Bacteria</taxon>
        <taxon>Pseudomonadati</taxon>
        <taxon>Pseudomonadota</taxon>
        <taxon>Gammaproteobacteria</taxon>
        <taxon>Enterobacterales</taxon>
        <taxon>Hafniaceae</taxon>
        <taxon>Edwardsiella</taxon>
    </lineage>
</organism>
<accession>C5BDA3</accession>
<comment type="function">
    <text evidence="1">Catalyzes the reversible phosphatidyl group transfer from one phosphatidylglycerol molecule to another to form cardiolipin (CL) (diphosphatidylglycerol) and glycerol.</text>
</comment>
<comment type="catalytic activity">
    <reaction evidence="1">
        <text>2 a 1,2-diacyl-sn-glycero-3-phospho-(1'-sn-glycerol) = a cardiolipin + glycerol</text>
        <dbReference type="Rhea" id="RHEA:31451"/>
        <dbReference type="ChEBI" id="CHEBI:17754"/>
        <dbReference type="ChEBI" id="CHEBI:62237"/>
        <dbReference type="ChEBI" id="CHEBI:64716"/>
    </reaction>
</comment>
<comment type="subcellular location">
    <subcellularLocation>
        <location evidence="1">Cell inner membrane</location>
        <topology evidence="1">Multi-pass membrane protein</topology>
    </subcellularLocation>
</comment>
<comment type="similarity">
    <text evidence="1">Belongs to the phospholipase D family. Cardiolipin synthase subfamily. ClsA sub-subfamily.</text>
</comment>
<reference key="1">
    <citation type="submission" date="2009-03" db="EMBL/GenBank/DDBJ databases">
        <title>Complete genome sequence of Edwardsiella ictaluri 93-146.</title>
        <authorList>
            <person name="Williams M.L."/>
            <person name="Gillaspy A.F."/>
            <person name="Dyer D.W."/>
            <person name="Thune R.L."/>
            <person name="Waldbieser G.C."/>
            <person name="Schuster S.C."/>
            <person name="Gipson J."/>
            <person name="Zaitshik J."/>
            <person name="Landry C."/>
            <person name="Lawrence M.L."/>
        </authorList>
    </citation>
    <scope>NUCLEOTIDE SEQUENCE [LARGE SCALE GENOMIC DNA]</scope>
    <source>
        <strain>93-146</strain>
    </source>
</reference>
<proteinExistence type="inferred from homology"/>
<evidence type="ECO:0000255" key="1">
    <source>
        <dbReference type="HAMAP-Rule" id="MF_00190"/>
    </source>
</evidence>
<sequence>MSTFYTVISWLAIFGYWLLIASVTLRILMKRRAVPSAMAWLLIIYILPLVGIIAYLSFGELHLGKRRAERARTMWPSTARWLADLRSCRSIFATHNSEVAAPLFQLCERRQGIAGVKGNQLQLLTSTDDTLNALIRDIELAHTSIEMMFYIWQPGGLADRVAEAMMAAARRGIRCRLMLDSAGSVAFFRSPYPAMMREAGIEVVEALQVNLLRVFLRRMDLRQHRKVVLIDNFIAYTGSMNLVDPRYFKQDAGVGQWIDVMARMEGPVATTMGIYYAFDWEMETGKRILPPEPICNILPFEKESGHTIQVIASGPGFPEELIHQSLLTAVYSARQQLVMTTPYFVPSDDLLHAICTAAQRGVDVSIIVPKKNDSMMVGWASRAFFTEMLAAGVKIYQFEGGLLHTKSVLVDGQLSLVGTVNLDMRSLWLNFEITLVIDDDGFGSDLACVQEDYIARSSLLDPLEWLKRPLWQRVVERLFYFFSPLL</sequence>
<name>CLSA_EDWI9</name>
<protein>
    <recommendedName>
        <fullName evidence="1">Cardiolipin synthase A</fullName>
        <shortName evidence="1">CL synthase</shortName>
        <ecNumber evidence="1">2.7.8.-</ecNumber>
    </recommendedName>
</protein>